<proteinExistence type="inferred from homology"/>
<reference key="1">
    <citation type="journal article" date="2002" name="Proc. Natl. Acad. Sci. U.S.A.">
        <title>The genome sequence of the facultative intracellular pathogen Brucella melitensis.</title>
        <authorList>
            <person name="DelVecchio V.G."/>
            <person name="Kapatral V."/>
            <person name="Redkar R.J."/>
            <person name="Patra G."/>
            <person name="Mujer C."/>
            <person name="Los T."/>
            <person name="Ivanova N."/>
            <person name="Anderson I."/>
            <person name="Bhattacharyya A."/>
            <person name="Lykidis A."/>
            <person name="Reznik G."/>
            <person name="Jablonski L."/>
            <person name="Larsen N."/>
            <person name="D'Souza M."/>
            <person name="Bernal A."/>
            <person name="Mazur M."/>
            <person name="Goltsman E."/>
            <person name="Selkov E."/>
            <person name="Elzer P.H."/>
            <person name="Hagius S."/>
            <person name="O'Callaghan D."/>
            <person name="Letesson J.-J."/>
            <person name="Haselkorn R."/>
            <person name="Kyrpides N.C."/>
            <person name="Overbeek R."/>
        </authorList>
    </citation>
    <scope>NUCLEOTIDE SEQUENCE [LARGE SCALE GENOMIC DNA]</scope>
    <source>
        <strain>ATCC 23456 / CCUG 17765 / NCTC 10094 / 16M</strain>
    </source>
</reference>
<protein>
    <recommendedName>
        <fullName evidence="1">Acetylornithine aminotransferase</fullName>
        <shortName evidence="1">ACOAT</shortName>
        <ecNumber evidence="1">2.6.1.11</ecNumber>
    </recommendedName>
</protein>
<evidence type="ECO:0000255" key="1">
    <source>
        <dbReference type="HAMAP-Rule" id="MF_01107"/>
    </source>
</evidence>
<keyword id="KW-0028">Amino-acid biosynthesis</keyword>
<keyword id="KW-0032">Aminotransferase</keyword>
<keyword id="KW-0055">Arginine biosynthesis</keyword>
<keyword id="KW-0963">Cytoplasm</keyword>
<keyword id="KW-0663">Pyridoxal phosphate</keyword>
<keyword id="KW-0808">Transferase</keyword>
<comment type="catalytic activity">
    <reaction evidence="1">
        <text>N(2)-acetyl-L-ornithine + 2-oxoglutarate = N-acetyl-L-glutamate 5-semialdehyde + L-glutamate</text>
        <dbReference type="Rhea" id="RHEA:18049"/>
        <dbReference type="ChEBI" id="CHEBI:16810"/>
        <dbReference type="ChEBI" id="CHEBI:29123"/>
        <dbReference type="ChEBI" id="CHEBI:29985"/>
        <dbReference type="ChEBI" id="CHEBI:57805"/>
        <dbReference type="EC" id="2.6.1.11"/>
    </reaction>
</comment>
<comment type="cofactor">
    <cofactor evidence="1">
        <name>pyridoxal 5'-phosphate</name>
        <dbReference type="ChEBI" id="CHEBI:597326"/>
    </cofactor>
    <text evidence="1">Binds 1 pyridoxal phosphate per subunit.</text>
</comment>
<comment type="pathway">
    <text evidence="1">Amino-acid biosynthesis; L-arginine biosynthesis; N(2)-acetyl-L-ornithine from L-glutamate: step 4/4.</text>
</comment>
<comment type="subunit">
    <text evidence="1">Homodimer.</text>
</comment>
<comment type="subcellular location">
    <subcellularLocation>
        <location evidence="1">Cytoplasm</location>
    </subcellularLocation>
</comment>
<comment type="miscellaneous">
    <text evidence="1">May also have succinyldiaminopimelate aminotransferase activity, thus carrying out the corresponding step in lysine biosynthesis.</text>
</comment>
<comment type="similarity">
    <text evidence="1">Belongs to the class-III pyridoxal-phosphate-dependent aminotransferase family. ArgD subfamily.</text>
</comment>
<gene>
    <name evidence="1" type="primary">argD</name>
    <name type="ordered locus">BMEI1621</name>
</gene>
<name>ARGD_BRUME</name>
<accession>P63566</accession>
<accession>Q8YFA1</accession>
<organism>
    <name type="scientific">Brucella melitensis biotype 1 (strain ATCC 23456 / CCUG 17765 / NCTC 10094 / 16M)</name>
    <dbReference type="NCBI Taxonomy" id="224914"/>
    <lineage>
        <taxon>Bacteria</taxon>
        <taxon>Pseudomonadati</taxon>
        <taxon>Pseudomonadota</taxon>
        <taxon>Alphaproteobacteria</taxon>
        <taxon>Hyphomicrobiales</taxon>
        <taxon>Brucellaceae</taxon>
        <taxon>Brucella/Ochrobactrum group</taxon>
        <taxon>Brucella</taxon>
    </lineage>
</organism>
<sequence length="403" mass="43453">MTDATTVHPLYDTYNRAALRFERGEGIWLITEDGERYIDFAAGIAVNSLGHSHPHLVETLKTQAEKLWHLSNVYEIPAQEKLGRRLVESTFADKVFFTNSGAEALECAIKTARRYQYVSGHPERFRIITFEGAFHGRTLATIAAGGQAKYLEGFGPKVEGFDQVPFGDEAALRAAITPETAGILLEPIQGEGGLRAFPEEFLRLVRQICDENGLLLLLDEVQTGVGRTGKLFAHEWAGIRPDIMAIAKGIGGGFPIGACLATAEAAKGMTAGMHGTTYGGNPLGMAVGNAVLDVVLADGFMENVQATALVMKQGLASLVDRYPNVVSEIRGRGLLMGLKCVVPNTSLIQALRDEHILSVGAGDNVVRLLPPLITTPEEAREALKHIETAVERLSIANPISKTV</sequence>
<feature type="chain" id="PRO_0000112732" description="Acetylornithine aminotransferase">
    <location>
        <begin position="1"/>
        <end position="403"/>
    </location>
</feature>
<feature type="binding site" evidence="1">
    <location>
        <begin position="101"/>
        <end position="102"/>
    </location>
    <ligand>
        <name>pyridoxal 5'-phosphate</name>
        <dbReference type="ChEBI" id="CHEBI:597326"/>
    </ligand>
</feature>
<feature type="binding site" evidence="1">
    <location>
        <position position="134"/>
    </location>
    <ligand>
        <name>pyridoxal 5'-phosphate</name>
        <dbReference type="ChEBI" id="CHEBI:597326"/>
    </ligand>
</feature>
<feature type="binding site" evidence="1">
    <location>
        <position position="137"/>
    </location>
    <ligand>
        <name>N(2)-acetyl-L-ornithine</name>
        <dbReference type="ChEBI" id="CHEBI:57805"/>
    </ligand>
</feature>
<feature type="binding site" evidence="1">
    <location>
        <begin position="219"/>
        <end position="222"/>
    </location>
    <ligand>
        <name>pyridoxal 5'-phosphate</name>
        <dbReference type="ChEBI" id="CHEBI:597326"/>
    </ligand>
</feature>
<feature type="binding site" evidence="1">
    <location>
        <position position="276"/>
    </location>
    <ligand>
        <name>N(2)-acetyl-L-ornithine</name>
        <dbReference type="ChEBI" id="CHEBI:57805"/>
    </ligand>
</feature>
<feature type="binding site" evidence="1">
    <location>
        <position position="277"/>
    </location>
    <ligand>
        <name>pyridoxal 5'-phosphate</name>
        <dbReference type="ChEBI" id="CHEBI:597326"/>
    </ligand>
</feature>
<feature type="modified residue" description="N6-(pyridoxal phosphate)lysine" evidence="1">
    <location>
        <position position="248"/>
    </location>
</feature>
<dbReference type="EC" id="2.6.1.11" evidence="1"/>
<dbReference type="EMBL" id="AE008917">
    <property type="protein sequence ID" value="AAL52802.1"/>
    <property type="molecule type" value="Genomic_DNA"/>
</dbReference>
<dbReference type="PIR" id="AG3454">
    <property type="entry name" value="AG3454"/>
</dbReference>
<dbReference type="RefSeq" id="WP_002963465.1">
    <property type="nucleotide sequence ID" value="NZ_GG703778.1"/>
</dbReference>
<dbReference type="SMR" id="P63566"/>
<dbReference type="KEGG" id="bme:BMEI1621"/>
<dbReference type="KEGG" id="bmel:DK63_1870"/>
<dbReference type="PATRIC" id="fig|224914.52.peg.1969"/>
<dbReference type="eggNOG" id="COG4992">
    <property type="taxonomic scope" value="Bacteria"/>
</dbReference>
<dbReference type="PhylomeDB" id="P63566"/>
<dbReference type="UniPathway" id="UPA00068">
    <property type="reaction ID" value="UER00109"/>
</dbReference>
<dbReference type="Proteomes" id="UP000000419">
    <property type="component" value="Chromosome I"/>
</dbReference>
<dbReference type="GO" id="GO:0005737">
    <property type="term" value="C:cytoplasm"/>
    <property type="evidence" value="ECO:0007669"/>
    <property type="project" value="UniProtKB-SubCell"/>
</dbReference>
<dbReference type="GO" id="GO:0042802">
    <property type="term" value="F:identical protein binding"/>
    <property type="evidence" value="ECO:0007669"/>
    <property type="project" value="TreeGrafter"/>
</dbReference>
<dbReference type="GO" id="GO:0003992">
    <property type="term" value="F:N2-acetyl-L-ornithine:2-oxoglutarate 5-aminotransferase activity"/>
    <property type="evidence" value="ECO:0007669"/>
    <property type="project" value="UniProtKB-UniRule"/>
</dbReference>
<dbReference type="GO" id="GO:0030170">
    <property type="term" value="F:pyridoxal phosphate binding"/>
    <property type="evidence" value="ECO:0007669"/>
    <property type="project" value="InterPro"/>
</dbReference>
<dbReference type="GO" id="GO:0006526">
    <property type="term" value="P:L-arginine biosynthetic process"/>
    <property type="evidence" value="ECO:0007669"/>
    <property type="project" value="UniProtKB-UniRule"/>
</dbReference>
<dbReference type="CDD" id="cd00610">
    <property type="entry name" value="OAT_like"/>
    <property type="match status" value="1"/>
</dbReference>
<dbReference type="FunFam" id="3.40.640.10:FF:000004">
    <property type="entry name" value="Acetylornithine aminotransferase"/>
    <property type="match status" value="1"/>
</dbReference>
<dbReference type="Gene3D" id="3.90.1150.10">
    <property type="entry name" value="Aspartate Aminotransferase, domain 1"/>
    <property type="match status" value="1"/>
</dbReference>
<dbReference type="Gene3D" id="3.40.640.10">
    <property type="entry name" value="Type I PLP-dependent aspartate aminotransferase-like (Major domain)"/>
    <property type="match status" value="1"/>
</dbReference>
<dbReference type="HAMAP" id="MF_01107">
    <property type="entry name" value="ArgD_aminotrans_3"/>
    <property type="match status" value="1"/>
</dbReference>
<dbReference type="InterPro" id="IPR004636">
    <property type="entry name" value="AcOrn/SuccOrn_fam"/>
</dbReference>
<dbReference type="InterPro" id="IPR005814">
    <property type="entry name" value="Aminotrans_3"/>
</dbReference>
<dbReference type="InterPro" id="IPR049704">
    <property type="entry name" value="Aminotrans_3_PPA_site"/>
</dbReference>
<dbReference type="InterPro" id="IPR050103">
    <property type="entry name" value="Class-III_PLP-dep_AT"/>
</dbReference>
<dbReference type="InterPro" id="IPR015424">
    <property type="entry name" value="PyrdxlP-dep_Trfase"/>
</dbReference>
<dbReference type="InterPro" id="IPR015421">
    <property type="entry name" value="PyrdxlP-dep_Trfase_major"/>
</dbReference>
<dbReference type="InterPro" id="IPR015422">
    <property type="entry name" value="PyrdxlP-dep_Trfase_small"/>
</dbReference>
<dbReference type="NCBIfam" id="TIGR00707">
    <property type="entry name" value="argD"/>
    <property type="match status" value="1"/>
</dbReference>
<dbReference type="NCBIfam" id="NF002325">
    <property type="entry name" value="PRK01278.1"/>
    <property type="match status" value="1"/>
</dbReference>
<dbReference type="PANTHER" id="PTHR11986">
    <property type="entry name" value="AMINOTRANSFERASE CLASS III"/>
    <property type="match status" value="1"/>
</dbReference>
<dbReference type="PANTHER" id="PTHR11986:SF113">
    <property type="entry name" value="SUCCINYLORNITHINE TRANSAMINASE"/>
    <property type="match status" value="1"/>
</dbReference>
<dbReference type="Pfam" id="PF00202">
    <property type="entry name" value="Aminotran_3"/>
    <property type="match status" value="1"/>
</dbReference>
<dbReference type="PIRSF" id="PIRSF000521">
    <property type="entry name" value="Transaminase_4ab_Lys_Orn"/>
    <property type="match status" value="1"/>
</dbReference>
<dbReference type="SUPFAM" id="SSF53383">
    <property type="entry name" value="PLP-dependent transferases"/>
    <property type="match status" value="1"/>
</dbReference>
<dbReference type="PROSITE" id="PS00600">
    <property type="entry name" value="AA_TRANSFER_CLASS_3"/>
    <property type="match status" value="1"/>
</dbReference>